<accession>Q1WU59</accession>
<gene>
    <name evidence="1" type="primary">purL</name>
    <name type="ordered locus">LSL_0666</name>
</gene>
<protein>
    <recommendedName>
        <fullName evidence="1">Phosphoribosylformylglycinamidine synthase subunit PurL</fullName>
        <shortName evidence="1">FGAM synthase</shortName>
        <ecNumber evidence="1">6.3.5.3</ecNumber>
    </recommendedName>
    <alternativeName>
        <fullName evidence="1">Formylglycinamide ribonucleotide amidotransferase subunit II</fullName>
        <shortName evidence="1">FGAR amidotransferase II</shortName>
        <shortName evidence="1">FGAR-AT II</shortName>
    </alternativeName>
    <alternativeName>
        <fullName evidence="1">Glutamine amidotransferase PurL</fullName>
    </alternativeName>
    <alternativeName>
        <fullName evidence="1">Phosphoribosylformylglycinamidine synthase subunit II</fullName>
    </alternativeName>
</protein>
<proteinExistence type="inferred from homology"/>
<dbReference type="EC" id="6.3.5.3" evidence="1"/>
<dbReference type="EMBL" id="CP000233">
    <property type="protein sequence ID" value="ABD99476.1"/>
    <property type="molecule type" value="Genomic_DNA"/>
</dbReference>
<dbReference type="RefSeq" id="WP_011475858.1">
    <property type="nucleotide sequence ID" value="NC_007929.1"/>
</dbReference>
<dbReference type="RefSeq" id="YP_535559.1">
    <property type="nucleotide sequence ID" value="NC_007929.1"/>
</dbReference>
<dbReference type="SMR" id="Q1WU59"/>
<dbReference type="STRING" id="362948.LSL_0666"/>
<dbReference type="KEGG" id="lsl:LSL_0666"/>
<dbReference type="PATRIC" id="fig|362948.14.peg.746"/>
<dbReference type="HOGENOM" id="CLU_003100_0_1_9"/>
<dbReference type="OrthoDB" id="9804441at2"/>
<dbReference type="UniPathway" id="UPA00074">
    <property type="reaction ID" value="UER00128"/>
</dbReference>
<dbReference type="Proteomes" id="UP000006559">
    <property type="component" value="Chromosome"/>
</dbReference>
<dbReference type="GO" id="GO:0005737">
    <property type="term" value="C:cytoplasm"/>
    <property type="evidence" value="ECO:0007669"/>
    <property type="project" value="UniProtKB-SubCell"/>
</dbReference>
<dbReference type="GO" id="GO:0005524">
    <property type="term" value="F:ATP binding"/>
    <property type="evidence" value="ECO:0007669"/>
    <property type="project" value="UniProtKB-UniRule"/>
</dbReference>
<dbReference type="GO" id="GO:0000287">
    <property type="term" value="F:magnesium ion binding"/>
    <property type="evidence" value="ECO:0007669"/>
    <property type="project" value="UniProtKB-UniRule"/>
</dbReference>
<dbReference type="GO" id="GO:0004642">
    <property type="term" value="F:phosphoribosylformylglycinamidine synthase activity"/>
    <property type="evidence" value="ECO:0007669"/>
    <property type="project" value="UniProtKB-UniRule"/>
</dbReference>
<dbReference type="GO" id="GO:0006189">
    <property type="term" value="P:'de novo' IMP biosynthetic process"/>
    <property type="evidence" value="ECO:0007669"/>
    <property type="project" value="UniProtKB-UniRule"/>
</dbReference>
<dbReference type="CDD" id="cd02203">
    <property type="entry name" value="PurL_repeat1"/>
    <property type="match status" value="1"/>
</dbReference>
<dbReference type="CDD" id="cd02204">
    <property type="entry name" value="PurL_repeat2"/>
    <property type="match status" value="1"/>
</dbReference>
<dbReference type="FunFam" id="3.30.1330.10:FF:000004">
    <property type="entry name" value="Phosphoribosylformylglycinamidine synthase subunit PurL"/>
    <property type="match status" value="1"/>
</dbReference>
<dbReference type="Gene3D" id="3.90.650.10">
    <property type="entry name" value="PurM-like C-terminal domain"/>
    <property type="match status" value="2"/>
</dbReference>
<dbReference type="Gene3D" id="3.30.1330.10">
    <property type="entry name" value="PurM-like, N-terminal domain"/>
    <property type="match status" value="2"/>
</dbReference>
<dbReference type="HAMAP" id="MF_00420">
    <property type="entry name" value="PurL_2"/>
    <property type="match status" value="1"/>
</dbReference>
<dbReference type="InterPro" id="IPR010074">
    <property type="entry name" value="PRibForGlyAmidine_synth_PurL"/>
</dbReference>
<dbReference type="InterPro" id="IPR041609">
    <property type="entry name" value="PurL_linker"/>
</dbReference>
<dbReference type="InterPro" id="IPR010918">
    <property type="entry name" value="PurM-like_C_dom"/>
</dbReference>
<dbReference type="InterPro" id="IPR036676">
    <property type="entry name" value="PurM-like_C_sf"/>
</dbReference>
<dbReference type="InterPro" id="IPR016188">
    <property type="entry name" value="PurM-like_N"/>
</dbReference>
<dbReference type="InterPro" id="IPR036921">
    <property type="entry name" value="PurM-like_N_sf"/>
</dbReference>
<dbReference type="NCBIfam" id="TIGR01736">
    <property type="entry name" value="FGAM_synth_II"/>
    <property type="match status" value="1"/>
</dbReference>
<dbReference type="NCBIfam" id="NF002290">
    <property type="entry name" value="PRK01213.1"/>
    <property type="match status" value="1"/>
</dbReference>
<dbReference type="PANTHER" id="PTHR43555">
    <property type="entry name" value="PHOSPHORIBOSYLFORMYLGLYCINAMIDINE SYNTHASE SUBUNIT PURL"/>
    <property type="match status" value="1"/>
</dbReference>
<dbReference type="PANTHER" id="PTHR43555:SF1">
    <property type="entry name" value="PHOSPHORIBOSYLFORMYLGLYCINAMIDINE SYNTHASE SUBUNIT PURL"/>
    <property type="match status" value="1"/>
</dbReference>
<dbReference type="Pfam" id="PF00586">
    <property type="entry name" value="AIRS"/>
    <property type="match status" value="2"/>
</dbReference>
<dbReference type="Pfam" id="PF02769">
    <property type="entry name" value="AIRS_C"/>
    <property type="match status" value="2"/>
</dbReference>
<dbReference type="Pfam" id="PF18072">
    <property type="entry name" value="FGAR-AT_linker"/>
    <property type="match status" value="1"/>
</dbReference>
<dbReference type="PIRSF" id="PIRSF001587">
    <property type="entry name" value="FGAM_synthase_II"/>
    <property type="match status" value="1"/>
</dbReference>
<dbReference type="SUPFAM" id="SSF56042">
    <property type="entry name" value="PurM C-terminal domain-like"/>
    <property type="match status" value="2"/>
</dbReference>
<dbReference type="SUPFAM" id="SSF55326">
    <property type="entry name" value="PurM N-terminal domain-like"/>
    <property type="match status" value="2"/>
</dbReference>
<evidence type="ECO:0000255" key="1">
    <source>
        <dbReference type="HAMAP-Rule" id="MF_00420"/>
    </source>
</evidence>
<keyword id="KW-0067">ATP-binding</keyword>
<keyword id="KW-0963">Cytoplasm</keyword>
<keyword id="KW-0436">Ligase</keyword>
<keyword id="KW-0460">Magnesium</keyword>
<keyword id="KW-0479">Metal-binding</keyword>
<keyword id="KW-0547">Nucleotide-binding</keyword>
<keyword id="KW-0658">Purine biosynthesis</keyword>
<keyword id="KW-1185">Reference proteome</keyword>
<comment type="function">
    <text evidence="1">Part of the phosphoribosylformylglycinamidine synthase complex involved in the purines biosynthetic pathway. Catalyzes the ATP-dependent conversion of formylglycinamide ribonucleotide (FGAR) and glutamine to yield formylglycinamidine ribonucleotide (FGAM) and glutamate. The FGAM synthase complex is composed of three subunits. PurQ produces an ammonia molecule by converting glutamine to glutamate. PurL transfers the ammonia molecule to FGAR to form FGAM in an ATP-dependent manner. PurS interacts with PurQ and PurL and is thought to assist in the transfer of the ammonia molecule from PurQ to PurL.</text>
</comment>
<comment type="catalytic activity">
    <reaction evidence="1">
        <text>N(2)-formyl-N(1)-(5-phospho-beta-D-ribosyl)glycinamide + L-glutamine + ATP + H2O = 2-formamido-N(1)-(5-O-phospho-beta-D-ribosyl)acetamidine + L-glutamate + ADP + phosphate + H(+)</text>
        <dbReference type="Rhea" id="RHEA:17129"/>
        <dbReference type="ChEBI" id="CHEBI:15377"/>
        <dbReference type="ChEBI" id="CHEBI:15378"/>
        <dbReference type="ChEBI" id="CHEBI:29985"/>
        <dbReference type="ChEBI" id="CHEBI:30616"/>
        <dbReference type="ChEBI" id="CHEBI:43474"/>
        <dbReference type="ChEBI" id="CHEBI:58359"/>
        <dbReference type="ChEBI" id="CHEBI:147286"/>
        <dbReference type="ChEBI" id="CHEBI:147287"/>
        <dbReference type="ChEBI" id="CHEBI:456216"/>
        <dbReference type="EC" id="6.3.5.3"/>
    </reaction>
</comment>
<comment type="pathway">
    <text evidence="1">Purine metabolism; IMP biosynthesis via de novo pathway; 5-amino-1-(5-phospho-D-ribosyl)imidazole from N(2)-formyl-N(1)-(5-phospho-D-ribosyl)glycinamide: step 1/2.</text>
</comment>
<comment type="subunit">
    <text evidence="1">Monomer. Part of the FGAM synthase complex composed of 1 PurL, 1 PurQ and 2 PurS subunits.</text>
</comment>
<comment type="subcellular location">
    <subcellularLocation>
        <location evidence="1">Cytoplasm</location>
    </subcellularLocation>
</comment>
<comment type="similarity">
    <text evidence="1">Belongs to the FGAMS family.</text>
</comment>
<organism>
    <name type="scientific">Ligilactobacillus salivarius (strain UCC118)</name>
    <name type="common">Lactobacillus salivarius</name>
    <dbReference type="NCBI Taxonomy" id="362948"/>
    <lineage>
        <taxon>Bacteria</taxon>
        <taxon>Bacillati</taxon>
        <taxon>Bacillota</taxon>
        <taxon>Bacilli</taxon>
        <taxon>Lactobacillales</taxon>
        <taxon>Lactobacillaceae</taxon>
        <taxon>Ligilactobacillus</taxon>
    </lineage>
</organism>
<reference key="1">
    <citation type="journal article" date="2006" name="Proc. Natl. Acad. Sci. U.S.A.">
        <title>Multireplicon genome architecture of Lactobacillus salivarius.</title>
        <authorList>
            <person name="Claesson M.J."/>
            <person name="Li Y."/>
            <person name="Leahy S."/>
            <person name="Canchaya C."/>
            <person name="van Pijkeren J.P."/>
            <person name="Cerdeno-Tarraga A.M."/>
            <person name="Parkhill J."/>
            <person name="Flynn S."/>
            <person name="O'Sullivan G.C."/>
            <person name="Collins J.K."/>
            <person name="Higgins D."/>
            <person name="Shanahan F."/>
            <person name="Fitzgerald G.F."/>
            <person name="van Sinderen D."/>
            <person name="O'Toole P.W."/>
        </authorList>
    </citation>
    <scope>NUCLEOTIDE SEQUENCE [LARGE SCALE GENOMIC DNA]</scope>
    <source>
        <strain>UCC118</strain>
    </source>
</reference>
<name>PURL_LIGS1</name>
<feature type="chain" id="PRO_1000050315" description="Phosphoribosylformylglycinamidine synthase subunit PurL">
    <location>
        <begin position="1"/>
        <end position="741"/>
    </location>
</feature>
<feature type="active site" evidence="1">
    <location>
        <position position="53"/>
    </location>
</feature>
<feature type="active site" description="Proton acceptor" evidence="1">
    <location>
        <position position="99"/>
    </location>
</feature>
<feature type="binding site" evidence="1">
    <location>
        <position position="56"/>
    </location>
    <ligand>
        <name>ATP</name>
        <dbReference type="ChEBI" id="CHEBI:30616"/>
    </ligand>
</feature>
<feature type="binding site" evidence="1">
    <location>
        <position position="95"/>
    </location>
    <ligand>
        <name>ATP</name>
        <dbReference type="ChEBI" id="CHEBI:30616"/>
    </ligand>
</feature>
<feature type="binding site" evidence="1">
    <location>
        <position position="97"/>
    </location>
    <ligand>
        <name>Mg(2+)</name>
        <dbReference type="ChEBI" id="CHEBI:18420"/>
        <label>1</label>
    </ligand>
</feature>
<feature type="binding site" evidence="1">
    <location>
        <begin position="98"/>
        <end position="101"/>
    </location>
    <ligand>
        <name>substrate</name>
    </ligand>
</feature>
<feature type="binding site" evidence="1">
    <location>
        <position position="120"/>
    </location>
    <ligand>
        <name>substrate</name>
    </ligand>
</feature>
<feature type="binding site" evidence="1">
    <location>
        <position position="121"/>
    </location>
    <ligand>
        <name>Mg(2+)</name>
        <dbReference type="ChEBI" id="CHEBI:18420"/>
        <label>2</label>
    </ligand>
</feature>
<feature type="binding site" evidence="1">
    <location>
        <position position="244"/>
    </location>
    <ligand>
        <name>substrate</name>
    </ligand>
</feature>
<feature type="binding site" evidence="1">
    <location>
        <position position="274"/>
    </location>
    <ligand>
        <name>Mg(2+)</name>
        <dbReference type="ChEBI" id="CHEBI:18420"/>
        <label>2</label>
    </ligand>
</feature>
<feature type="binding site" evidence="1">
    <location>
        <begin position="318"/>
        <end position="320"/>
    </location>
    <ligand>
        <name>substrate</name>
    </ligand>
</feature>
<feature type="binding site" evidence="1">
    <location>
        <position position="501"/>
    </location>
    <ligand>
        <name>ATP</name>
        <dbReference type="ChEBI" id="CHEBI:30616"/>
    </ligand>
</feature>
<feature type="binding site" evidence="1">
    <location>
        <position position="538"/>
    </location>
    <ligand>
        <name>ATP</name>
        <dbReference type="ChEBI" id="CHEBI:30616"/>
    </ligand>
</feature>
<feature type="binding site" evidence="1">
    <location>
        <position position="539"/>
    </location>
    <ligand>
        <name>Mg(2+)</name>
        <dbReference type="ChEBI" id="CHEBI:18420"/>
        <label>1</label>
    </ligand>
</feature>
<feature type="binding site" evidence="1">
    <location>
        <position position="541"/>
    </location>
    <ligand>
        <name>substrate</name>
    </ligand>
</feature>
<sequence>MNKELTPEQIKEQKVYLEWGLTQKEYEYICDKLLGRLPNYTETGLFSVMWSEHCSYKKSKPVLKLFPNKNERVLQGPGEGAGIVDIGDNQAVVFKAESHNHPSAVEPYEGAATGVGGILRDIFSMGARPIASLDSLHFGEIDNARTKYLINEVVAGIGGYGNCMGIPTVAGEITFDDCYAGNPLVNAMSVGILDQSHIQKGQAKGIGNAVMYVGAKTGRDGIHGATFASADFADDKETQRSAVQVGDPFMEKLLMEACIELTNNHQDWLVGIQDMGAAGIVSSSCEMSSKANSGMELNLDMVPQREEGMSAYEIMLSESQERMLLCVKKGHENDVKKLFEDYNLEAVVIGRVTEGHDYILHHKGEVVTNIPVSTLTDDVLEEPSEERVPQRILDNKNKDTWVPQLSSAKETLEALLQQPTIASKKMFTETYDSQVRTSTVVGPGSDAGVIRIRGTKKALAMTTDGNGRFIYLNPEVGGKIAVLEAATNIISSGALPLAITDCLNYGDPNDPEIYWELHQSINGMAEACRTLDTPVISGNVSLYNENNGEAIYPTAMIGMVGLIKDVYRTVPSFVQNTGDKLYLVGKTGNDFNGSELQKLLNNKITGDLNDFDLEKVNSYLKNLLVTMEQGLVSSSHDLSEGGLGVSLAEMVFGTDKGIKVSLDMKKELLFSETPGRLVVSVSKDNVAAFEEIMGEDITEIGEVQVDHQLDITLTDDNFVAEVSELEKLWEEAIPCLMKSKD</sequence>